<reference key="1">
    <citation type="submission" date="2009-06" db="EMBL/GenBank/DDBJ databases">
        <title>Complete sequence of Dickeya dadantii Ech703.</title>
        <authorList>
            <consortium name="US DOE Joint Genome Institute"/>
            <person name="Lucas S."/>
            <person name="Copeland A."/>
            <person name="Lapidus A."/>
            <person name="Glavina del Rio T."/>
            <person name="Dalin E."/>
            <person name="Tice H."/>
            <person name="Bruce D."/>
            <person name="Goodwin L."/>
            <person name="Pitluck S."/>
            <person name="Chertkov O."/>
            <person name="Brettin T."/>
            <person name="Detter J.C."/>
            <person name="Han C."/>
            <person name="Larimer F."/>
            <person name="Land M."/>
            <person name="Hauser L."/>
            <person name="Kyrpides N."/>
            <person name="Mikhailova N."/>
            <person name="Balakrishnan V."/>
            <person name="Glasner J."/>
            <person name="Perna N.T."/>
        </authorList>
    </citation>
    <scope>NUCLEOTIDE SEQUENCE [LARGE SCALE GENOMIC DNA]</scope>
    <source>
        <strain>Ech703</strain>
    </source>
</reference>
<keyword id="KW-0489">Methyltransferase</keyword>
<keyword id="KW-0949">S-adenosyl-L-methionine</keyword>
<keyword id="KW-0808">Transferase</keyword>
<keyword id="KW-0819">tRNA processing</keyword>
<dbReference type="EC" id="2.1.1.-" evidence="1"/>
<dbReference type="EC" id="2.1.1.35" evidence="1"/>
<dbReference type="EMBL" id="CP001654">
    <property type="protein sequence ID" value="ACS87537.1"/>
    <property type="molecule type" value="Genomic_DNA"/>
</dbReference>
<dbReference type="RefSeq" id="WP_015855429.1">
    <property type="nucleotide sequence ID" value="NC_012880.1"/>
</dbReference>
<dbReference type="SMR" id="C6C5A0"/>
<dbReference type="STRING" id="579405.Dd703_3784"/>
<dbReference type="KEGG" id="dda:Dd703_3784"/>
<dbReference type="eggNOG" id="COG2265">
    <property type="taxonomic scope" value="Bacteria"/>
</dbReference>
<dbReference type="HOGENOM" id="CLU_043022_0_0_6"/>
<dbReference type="Proteomes" id="UP000002734">
    <property type="component" value="Chromosome"/>
</dbReference>
<dbReference type="GO" id="GO:0005829">
    <property type="term" value="C:cytosol"/>
    <property type="evidence" value="ECO:0007669"/>
    <property type="project" value="TreeGrafter"/>
</dbReference>
<dbReference type="GO" id="GO:0019843">
    <property type="term" value="F:rRNA binding"/>
    <property type="evidence" value="ECO:0007669"/>
    <property type="project" value="TreeGrafter"/>
</dbReference>
<dbReference type="GO" id="GO:0030697">
    <property type="term" value="F:tRNA (uracil(54)-C5)-methyltransferase activity, S-adenosyl methionine-dependent"/>
    <property type="evidence" value="ECO:0007669"/>
    <property type="project" value="UniProtKB-UniRule"/>
</dbReference>
<dbReference type="GO" id="GO:0000049">
    <property type="term" value="F:tRNA binding"/>
    <property type="evidence" value="ECO:0007669"/>
    <property type="project" value="TreeGrafter"/>
</dbReference>
<dbReference type="GO" id="GO:0030488">
    <property type="term" value="P:tRNA methylation"/>
    <property type="evidence" value="ECO:0007669"/>
    <property type="project" value="UniProtKB-UniRule"/>
</dbReference>
<dbReference type="CDD" id="cd02440">
    <property type="entry name" value="AdoMet_MTases"/>
    <property type="match status" value="1"/>
</dbReference>
<dbReference type="FunFam" id="2.40.50.1070:FF:000001">
    <property type="entry name" value="tRNA/tmRNA (uracil-C(5))-methyltransferase"/>
    <property type="match status" value="1"/>
</dbReference>
<dbReference type="FunFam" id="3.40.50.150:FF:000012">
    <property type="entry name" value="tRNA/tmRNA (uracil-C(5))-methyltransferase"/>
    <property type="match status" value="1"/>
</dbReference>
<dbReference type="Gene3D" id="2.40.50.1070">
    <property type="match status" value="1"/>
</dbReference>
<dbReference type="Gene3D" id="3.40.50.150">
    <property type="entry name" value="Vaccinia Virus protein VP39"/>
    <property type="match status" value="1"/>
</dbReference>
<dbReference type="HAMAP" id="MF_01011">
    <property type="entry name" value="RNA_methyltr_TrmA"/>
    <property type="match status" value="1"/>
</dbReference>
<dbReference type="InterPro" id="IPR030390">
    <property type="entry name" value="MeTrfase_TrmA_AS"/>
</dbReference>
<dbReference type="InterPro" id="IPR030391">
    <property type="entry name" value="MeTrfase_TrmA_CS"/>
</dbReference>
<dbReference type="InterPro" id="IPR029063">
    <property type="entry name" value="SAM-dependent_MTases_sf"/>
</dbReference>
<dbReference type="InterPro" id="IPR011869">
    <property type="entry name" value="TrmA_MeTrfase"/>
</dbReference>
<dbReference type="InterPro" id="IPR010280">
    <property type="entry name" value="U5_MeTrfase_fam"/>
</dbReference>
<dbReference type="NCBIfam" id="TIGR02143">
    <property type="entry name" value="trmA_only"/>
    <property type="match status" value="1"/>
</dbReference>
<dbReference type="PANTHER" id="PTHR47790">
    <property type="entry name" value="TRNA/TMRNA (URACIL-C(5))-METHYLTRANSFERASE"/>
    <property type="match status" value="1"/>
</dbReference>
<dbReference type="PANTHER" id="PTHR47790:SF2">
    <property type="entry name" value="TRNA_TMRNA (URACIL-C(5))-METHYLTRANSFERASE"/>
    <property type="match status" value="1"/>
</dbReference>
<dbReference type="Pfam" id="PF05958">
    <property type="entry name" value="tRNA_U5-meth_tr"/>
    <property type="match status" value="1"/>
</dbReference>
<dbReference type="SUPFAM" id="SSF53335">
    <property type="entry name" value="S-adenosyl-L-methionine-dependent methyltransferases"/>
    <property type="match status" value="1"/>
</dbReference>
<dbReference type="PROSITE" id="PS51687">
    <property type="entry name" value="SAM_MT_RNA_M5U"/>
    <property type="match status" value="1"/>
</dbReference>
<dbReference type="PROSITE" id="PS01230">
    <property type="entry name" value="TRMA_1"/>
    <property type="match status" value="1"/>
</dbReference>
<dbReference type="PROSITE" id="PS01231">
    <property type="entry name" value="TRMA_2"/>
    <property type="match status" value="1"/>
</dbReference>
<comment type="function">
    <text evidence="1">Dual-specificity methyltransferase that catalyzes the formation of 5-methyluridine at position 54 (m5U54) in all tRNAs, and that of position 341 (m5U341) in tmRNA (transfer-mRNA).</text>
</comment>
<comment type="catalytic activity">
    <reaction evidence="1">
        <text>uridine(54) in tRNA + S-adenosyl-L-methionine = 5-methyluridine(54) in tRNA + S-adenosyl-L-homocysteine + H(+)</text>
        <dbReference type="Rhea" id="RHEA:42712"/>
        <dbReference type="Rhea" id="RHEA-COMP:10167"/>
        <dbReference type="Rhea" id="RHEA-COMP:10193"/>
        <dbReference type="ChEBI" id="CHEBI:15378"/>
        <dbReference type="ChEBI" id="CHEBI:57856"/>
        <dbReference type="ChEBI" id="CHEBI:59789"/>
        <dbReference type="ChEBI" id="CHEBI:65315"/>
        <dbReference type="ChEBI" id="CHEBI:74447"/>
        <dbReference type="EC" id="2.1.1.35"/>
    </reaction>
</comment>
<comment type="catalytic activity">
    <reaction evidence="1">
        <text>uridine(341) in tmRNA + S-adenosyl-L-methionine = 5-methyluridine(341) in tmRNA + S-adenosyl-L-homocysteine + H(+)</text>
        <dbReference type="Rhea" id="RHEA:43612"/>
        <dbReference type="Rhea" id="RHEA-COMP:10630"/>
        <dbReference type="Rhea" id="RHEA-COMP:10631"/>
        <dbReference type="ChEBI" id="CHEBI:15378"/>
        <dbReference type="ChEBI" id="CHEBI:57856"/>
        <dbReference type="ChEBI" id="CHEBI:59789"/>
        <dbReference type="ChEBI" id="CHEBI:65315"/>
        <dbReference type="ChEBI" id="CHEBI:74447"/>
    </reaction>
</comment>
<comment type="similarity">
    <text evidence="1">Belongs to the class I-like SAM-binding methyltransferase superfamily. RNA M5U methyltransferase family. TrmA subfamily.</text>
</comment>
<feature type="chain" id="PRO_0000388553" description="tRNA/tmRNA (uracil-C(5))-methyltransferase">
    <location>
        <begin position="1"/>
        <end position="367"/>
    </location>
</feature>
<feature type="active site" description="Nucleophile" evidence="1">
    <location>
        <position position="324"/>
    </location>
</feature>
<feature type="active site" description="Proton acceptor" evidence="1">
    <location>
        <position position="358"/>
    </location>
</feature>
<feature type="binding site" evidence="1">
    <location>
        <position position="190"/>
    </location>
    <ligand>
        <name>S-adenosyl-L-methionine</name>
        <dbReference type="ChEBI" id="CHEBI:59789"/>
    </ligand>
</feature>
<feature type="binding site" evidence="1">
    <location>
        <position position="218"/>
    </location>
    <ligand>
        <name>S-adenosyl-L-methionine</name>
        <dbReference type="ChEBI" id="CHEBI:59789"/>
    </ligand>
</feature>
<feature type="binding site" evidence="1">
    <location>
        <position position="223"/>
    </location>
    <ligand>
        <name>S-adenosyl-L-methionine</name>
        <dbReference type="ChEBI" id="CHEBI:59789"/>
    </ligand>
</feature>
<feature type="binding site" evidence="1">
    <location>
        <position position="239"/>
    </location>
    <ligand>
        <name>S-adenosyl-L-methionine</name>
        <dbReference type="ChEBI" id="CHEBI:59789"/>
    </ligand>
</feature>
<feature type="binding site" evidence="1">
    <location>
        <position position="299"/>
    </location>
    <ligand>
        <name>S-adenosyl-L-methionine</name>
        <dbReference type="ChEBI" id="CHEBI:59789"/>
    </ligand>
</feature>
<organism>
    <name type="scientific">Musicola paradisiaca (strain Ech703)</name>
    <name type="common">Dickeya paradisiaca</name>
    <name type="synonym">Dickeya dadantii</name>
    <dbReference type="NCBI Taxonomy" id="579405"/>
    <lineage>
        <taxon>Bacteria</taxon>
        <taxon>Pseudomonadati</taxon>
        <taxon>Pseudomonadota</taxon>
        <taxon>Gammaproteobacteria</taxon>
        <taxon>Enterobacterales</taxon>
        <taxon>Pectobacteriaceae</taxon>
        <taxon>Musicola</taxon>
    </lineage>
</organism>
<accession>C6C5A0</accession>
<evidence type="ECO:0000255" key="1">
    <source>
        <dbReference type="HAMAP-Rule" id="MF_01011"/>
    </source>
</evidence>
<sequence>MTPSTLPIDQYDAQLAEKTGRLKAMMASYHAPEPQVFRSPVSHYRMRAEFRIWHDGDDLYHIMFDQQTKHRIRVDQFPVASELINRLMPALLNALRPHLTLRRKLFQIDYLSTMSNEIVVSLLYHKTLDDEWRQQAIALRDQLRQQGFNLQLIGRATKTKICLDHDYVDECLPVAGKQMVYRQVENSFTQPNAAMNIQMLEWALSVTEGSKGDLLELYCGNGNFSLALARNFERVLATEIAKPSVQAAQYNITANQIGNVQIIRMAAEEFTQAMRGVRQFNRLEGIDLASYRCDTIFVDPPRSGLDEETVRLVQEYPRILYISCNPETLCANLATLTQTHRVSQLALFDQFPYTHHMECGVLLEKRT</sequence>
<name>TRMA_MUSP7</name>
<proteinExistence type="inferred from homology"/>
<protein>
    <recommendedName>
        <fullName evidence="1">tRNA/tmRNA (uracil-C(5))-methyltransferase</fullName>
        <ecNumber evidence="1">2.1.1.-</ecNumber>
        <ecNumber evidence="1">2.1.1.35</ecNumber>
    </recommendedName>
    <alternativeName>
        <fullName evidence="1">tRNA (uracil(54)-C(5))-methyltransferase</fullName>
    </alternativeName>
    <alternativeName>
        <fullName evidence="1">tRNA(m5U54)-methyltransferase</fullName>
        <shortName evidence="1">RUMT</shortName>
    </alternativeName>
    <alternativeName>
        <fullName evidence="1">tmRNA (uracil(341)-C(5))-methyltransferase</fullName>
    </alternativeName>
</protein>
<gene>
    <name evidence="1" type="primary">trmA</name>
    <name type="ordered locus">Dd703_3784</name>
</gene>